<keyword id="KW-0963">Cytoplasm</keyword>
<keyword id="KW-0217">Developmental protein</keyword>
<keyword id="KW-0238">DNA-binding</keyword>
<keyword id="KW-1017">Isopeptide bond</keyword>
<keyword id="KW-0479">Metal-binding</keyword>
<keyword id="KW-0539">Nucleus</keyword>
<keyword id="KW-1185">Reference proteome</keyword>
<keyword id="KW-0677">Repeat</keyword>
<keyword id="KW-0691">RNA editing</keyword>
<keyword id="KW-0694">RNA-binding</keyword>
<keyword id="KW-0804">Transcription</keyword>
<keyword id="KW-0805">Transcription regulation</keyword>
<keyword id="KW-0043">Tumor suppressor</keyword>
<keyword id="KW-0832">Ubl conjugation</keyword>
<keyword id="KW-0879">Wnt signaling pathway</keyword>
<keyword id="KW-0862">Zinc</keyword>
<keyword id="KW-0863">Zinc-finger</keyword>
<sequence length="407" mass="45983">MGSDVRDMNLLPPVSSLSGNSSCNMPVSNSSQWAPVLDFPPGAPYSSLTPHSFIKQEPTWNPDPHEDQCLSAFTVHFSGQFTGTAGACRYGPFGAPTPSQATTGQARMFPNAPYLSNCLDNQQSMRNQGYSAVAFDGTPSYGHTPSHHTAQFTNHSFKHEDPISQQTSLGEQQYSVPPPVYGCHTPTDTCTGSQALLLRTPYNSDNLYQMECMTWNQMNLGSSLKSHGTTYENDSHSAPMLYSCGGQYRIHTHGVFRGIQDVRRVPGVTPAIVRSTEANEKRPFMCAYPGCNKRYFKLSHLQMHSRKHTGEKPYQCDFKDCERRFSRSDQLKRHQRRHTGVKPFQCKTCQRKFSRSDHLKTHTRTHTGEKPFSCRWPSCQKKFARSDELVRHHNMHQRNMTKLQLAL</sequence>
<comment type="function">
    <text evidence="1 2 6">Transcription factor required for development of the vascular component of the pronephric kidney, the glomus; may repress tubule-specific gene expression in the portion of the pronephros fated to form the glomus (PubMed:16818449). Recognizes and binds to the DNA sequence 5'-GCG(T/G)GGGCG-3' (By similarity). Inhibits Wnt-signaling during embryonic development (By similarity).</text>
</comment>
<comment type="subcellular location">
    <subcellularLocation>
        <location evidence="3">Nucleus</location>
    </subcellularLocation>
    <subcellularLocation>
        <location evidence="3">Cytoplasm</location>
    </subcellularLocation>
    <subcellularLocation>
        <location evidence="3">Nucleus speckle</location>
    </subcellularLocation>
    <text evidence="3">Shuttles between nucleus and cytoplasm.</text>
</comment>
<comment type="tissue specificity">
    <text evidence="7">Expressed in the pronephric anlage from stage 23 to 30. Also expressed in the adult kidney (mesonephros) and in testis.</text>
</comment>
<comment type="domain">
    <text evidence="2">Binds to DNA motifs with the sequence 5'-GCG(T/G)GGGCG-3' via its C2H2-type zinc fingers. Starting from the N-terminus, the second zinc finger binds to the 3'-GCG motif, the middle zinc finger interacts with the central TGG motif, and the C-terminal zinc finger binds to the 5'-GCG motif. Binds double-stranded target DNA, irrespective of the cytosine methylation status. Has reduced affinity for target DNA where the cytosines have been oxidized to 5-hydroxymethylcytosine, 5-formylcytosine or 5-carboxylcytosine.</text>
</comment>
<comment type="domain">
    <text evidence="2">The 9aaTAD motif is a transactivation domain present in a large number of yeast and animal transcription factors.</text>
</comment>
<comment type="similarity">
    <text evidence="4">Belongs to the EGR C2H2-type zinc-finger protein family.</text>
</comment>
<organism>
    <name type="scientific">Xenopus laevis</name>
    <name type="common">African clawed frog</name>
    <dbReference type="NCBI Taxonomy" id="8355"/>
    <lineage>
        <taxon>Eukaryota</taxon>
        <taxon>Metazoa</taxon>
        <taxon>Chordata</taxon>
        <taxon>Craniata</taxon>
        <taxon>Vertebrata</taxon>
        <taxon>Euteleostomi</taxon>
        <taxon>Amphibia</taxon>
        <taxon>Batrachia</taxon>
        <taxon>Anura</taxon>
        <taxon>Pipoidea</taxon>
        <taxon>Pipidae</taxon>
        <taxon>Xenopodinae</taxon>
        <taxon>Xenopus</taxon>
        <taxon>Xenopus</taxon>
    </lineage>
</organism>
<evidence type="ECO:0000250" key="1">
    <source>
        <dbReference type="UniProtKB" id="B7ZSG3"/>
    </source>
</evidence>
<evidence type="ECO:0000250" key="2">
    <source>
        <dbReference type="UniProtKB" id="P19544"/>
    </source>
</evidence>
<evidence type="ECO:0000250" key="3">
    <source>
        <dbReference type="UniProtKB" id="P22561"/>
    </source>
</evidence>
<evidence type="ECO:0000255" key="4"/>
<evidence type="ECO:0000255" key="5">
    <source>
        <dbReference type="PROSITE-ProRule" id="PRU00042"/>
    </source>
</evidence>
<evidence type="ECO:0000269" key="6">
    <source>
    </source>
</evidence>
<evidence type="ECO:0000269" key="7">
    <source>
    </source>
</evidence>
<evidence type="ECO:0000303" key="8">
    <source>
    </source>
</evidence>
<evidence type="ECO:0000303" key="9">
    <source>
    </source>
</evidence>
<evidence type="ECO:0000305" key="10"/>
<evidence type="ECO:0000312" key="11">
    <source>
        <dbReference type="EMBL" id="BAA11522.1"/>
    </source>
</evidence>
<reference evidence="10 11" key="1">
    <citation type="journal article" date="1996" name="Gene">
        <title>cDNA cloning and its pronephros-specific expression of the Wilms' tumor suppressor gene, WT1, from Xenopus laevis.</title>
        <authorList>
            <person name="Semba K."/>
            <person name="Saito-Ueno R."/>
            <person name="Takayama G."/>
            <person name="Kondo M."/>
        </authorList>
    </citation>
    <scope>NUCLEOTIDE SEQUENCE [MRNA]</scope>
    <scope>TISSUE SPECIFICITY</scope>
    <source>
        <tissue evidence="11">Testis</tissue>
    </source>
</reference>
<reference evidence="10" key="2">
    <citation type="journal article" date="2006" name="Development">
        <title>The Notch-effector HRT1 gene plays a role in glomerular development and patterning of the Xenopus pronephros anlagen.</title>
        <authorList>
            <person name="Taelman V."/>
            <person name="Van Campenhout C."/>
            <person name="Soelter M."/>
            <person name="Pieler T."/>
            <person name="Bellefroid E.J."/>
        </authorList>
    </citation>
    <scope>FUNCTION</scope>
</reference>
<protein>
    <recommendedName>
        <fullName>Wilms tumor protein homolog B</fullName>
        <shortName evidence="8">XWT1b</shortName>
        <shortName evidence="9">XeWT1</shortName>
    </recommendedName>
</protein>
<name>WT1B_XENLA</name>
<dbReference type="EMBL" id="D82051">
    <property type="protein sequence ID" value="BAA11522.1"/>
    <property type="molecule type" value="mRNA"/>
</dbReference>
<dbReference type="PIR" id="JC5046">
    <property type="entry name" value="JC5046"/>
</dbReference>
<dbReference type="RefSeq" id="NP_001079336.1">
    <property type="nucleotide sequence ID" value="NM_001085867.1"/>
</dbReference>
<dbReference type="BMRB" id="P79958"/>
<dbReference type="SMR" id="P79958"/>
<dbReference type="GeneID" id="378664"/>
<dbReference type="KEGG" id="xla:378664"/>
<dbReference type="AGR" id="Xenbase:XB-GENE-6252376"/>
<dbReference type="CTD" id="378664"/>
<dbReference type="Xenbase" id="XB-GENE-6252376">
    <property type="gene designation" value="wt1.L"/>
</dbReference>
<dbReference type="OrthoDB" id="8922241at2759"/>
<dbReference type="Proteomes" id="UP000186698">
    <property type="component" value="Chromosome 4L"/>
</dbReference>
<dbReference type="Bgee" id="378664">
    <property type="expression patterns" value="Expressed in kidney and 6 other cell types or tissues"/>
</dbReference>
<dbReference type="GO" id="GO:0005737">
    <property type="term" value="C:cytoplasm"/>
    <property type="evidence" value="ECO:0007669"/>
    <property type="project" value="UniProtKB-SubCell"/>
</dbReference>
<dbReference type="GO" id="GO:0016607">
    <property type="term" value="C:nuclear speck"/>
    <property type="evidence" value="ECO:0007669"/>
    <property type="project" value="UniProtKB-SubCell"/>
</dbReference>
<dbReference type="GO" id="GO:0000981">
    <property type="term" value="F:DNA-binding transcription factor activity, RNA polymerase II-specific"/>
    <property type="evidence" value="ECO:0000318"/>
    <property type="project" value="GO_Central"/>
</dbReference>
<dbReference type="GO" id="GO:0010385">
    <property type="term" value="F:double-stranded methylated DNA binding"/>
    <property type="evidence" value="ECO:0000250"/>
    <property type="project" value="UniProtKB"/>
</dbReference>
<dbReference type="GO" id="GO:0044729">
    <property type="term" value="F:hemi-methylated DNA-binding"/>
    <property type="evidence" value="ECO:0000250"/>
    <property type="project" value="UniProtKB"/>
</dbReference>
<dbReference type="GO" id="GO:0003723">
    <property type="term" value="F:RNA binding"/>
    <property type="evidence" value="ECO:0007669"/>
    <property type="project" value="UniProtKB-KW"/>
</dbReference>
<dbReference type="GO" id="GO:0000978">
    <property type="term" value="F:RNA polymerase II cis-regulatory region sequence-specific DNA binding"/>
    <property type="evidence" value="ECO:0000318"/>
    <property type="project" value="GO_Central"/>
</dbReference>
<dbReference type="GO" id="GO:0043565">
    <property type="term" value="F:sequence-specific DNA binding"/>
    <property type="evidence" value="ECO:0000250"/>
    <property type="project" value="UniProtKB"/>
</dbReference>
<dbReference type="GO" id="GO:0008270">
    <property type="term" value="F:zinc ion binding"/>
    <property type="evidence" value="ECO:0000250"/>
    <property type="project" value="UniProtKB"/>
</dbReference>
<dbReference type="GO" id="GO:0072013">
    <property type="term" value="P:glomus development"/>
    <property type="evidence" value="ECO:0000315"/>
    <property type="project" value="UniProtKB"/>
</dbReference>
<dbReference type="GO" id="GO:0043066">
    <property type="term" value="P:negative regulation of apoptotic process"/>
    <property type="evidence" value="ECO:0000318"/>
    <property type="project" value="GO_Central"/>
</dbReference>
<dbReference type="GO" id="GO:0008285">
    <property type="term" value="P:negative regulation of cell population proliferation"/>
    <property type="evidence" value="ECO:0000318"/>
    <property type="project" value="GO_Central"/>
</dbReference>
<dbReference type="GO" id="GO:0000122">
    <property type="term" value="P:negative regulation of transcription by RNA polymerase II"/>
    <property type="evidence" value="ECO:0000250"/>
    <property type="project" value="UniProtKB"/>
</dbReference>
<dbReference type="GO" id="GO:0030178">
    <property type="term" value="P:negative regulation of Wnt signaling pathway"/>
    <property type="evidence" value="ECO:0000250"/>
    <property type="project" value="UniProtKB"/>
</dbReference>
<dbReference type="GO" id="GO:0048793">
    <property type="term" value="P:pronephros development"/>
    <property type="evidence" value="ECO:0000270"/>
    <property type="project" value="UniProtKB"/>
</dbReference>
<dbReference type="GO" id="GO:0006357">
    <property type="term" value="P:regulation of transcription by RNA polymerase II"/>
    <property type="evidence" value="ECO:0000315"/>
    <property type="project" value="UniProtKB"/>
</dbReference>
<dbReference type="GO" id="GO:0016055">
    <property type="term" value="P:Wnt signaling pathway"/>
    <property type="evidence" value="ECO:0007669"/>
    <property type="project" value="UniProtKB-KW"/>
</dbReference>
<dbReference type="FunFam" id="3.30.160.60:FF:000018">
    <property type="entry name" value="Krueppel-like factor 15"/>
    <property type="match status" value="1"/>
</dbReference>
<dbReference type="FunFam" id="3.30.160.60:FF:000228">
    <property type="entry name" value="Wilms tumor 1-KTS isoform"/>
    <property type="match status" value="1"/>
</dbReference>
<dbReference type="FunFam" id="3.30.160.60:FF:001092">
    <property type="entry name" value="Wilms tumor protein isoform X2"/>
    <property type="match status" value="1"/>
</dbReference>
<dbReference type="FunFam" id="3.30.160.60:FF:000072">
    <property type="entry name" value="zinc finger protein 143 isoform X1"/>
    <property type="match status" value="1"/>
</dbReference>
<dbReference type="Gene3D" id="3.30.160.60">
    <property type="entry name" value="Classic Zinc Finger"/>
    <property type="match status" value="4"/>
</dbReference>
<dbReference type="InterPro" id="IPR000976">
    <property type="entry name" value="Wilms_tumour_N"/>
</dbReference>
<dbReference type="InterPro" id="IPR036236">
    <property type="entry name" value="Znf_C2H2_sf"/>
</dbReference>
<dbReference type="InterPro" id="IPR013087">
    <property type="entry name" value="Znf_C2H2_type"/>
</dbReference>
<dbReference type="PANTHER" id="PTHR23235:SF164">
    <property type="entry name" value="C2H2-TYPE DOMAIN-CONTAINING PROTEIN"/>
    <property type="match status" value="1"/>
</dbReference>
<dbReference type="PANTHER" id="PTHR23235">
    <property type="entry name" value="KRUEPPEL-LIKE TRANSCRIPTION FACTOR"/>
    <property type="match status" value="1"/>
</dbReference>
<dbReference type="Pfam" id="PF02165">
    <property type="entry name" value="WT1"/>
    <property type="match status" value="1"/>
</dbReference>
<dbReference type="Pfam" id="PF00096">
    <property type="entry name" value="zf-C2H2"/>
    <property type="match status" value="3"/>
</dbReference>
<dbReference type="PRINTS" id="PR00049">
    <property type="entry name" value="WILMSTUMOUR"/>
</dbReference>
<dbReference type="SMART" id="SM00355">
    <property type="entry name" value="ZnF_C2H2"/>
    <property type="match status" value="4"/>
</dbReference>
<dbReference type="SUPFAM" id="SSF57667">
    <property type="entry name" value="beta-beta-alpha zinc fingers"/>
    <property type="match status" value="2"/>
</dbReference>
<dbReference type="PROSITE" id="PS00028">
    <property type="entry name" value="ZINC_FINGER_C2H2_1"/>
    <property type="match status" value="4"/>
</dbReference>
<dbReference type="PROSITE" id="PS50157">
    <property type="entry name" value="ZINC_FINGER_C2H2_2"/>
    <property type="match status" value="4"/>
</dbReference>
<proteinExistence type="evidence at transcript level"/>
<feature type="chain" id="PRO_0000391388" description="Wilms tumor protein homolog B">
    <location>
        <begin position="1"/>
        <end position="407"/>
    </location>
</feature>
<feature type="zinc finger region" description="C2H2-type 1" evidence="5">
    <location>
        <begin position="284"/>
        <end position="308"/>
    </location>
</feature>
<feature type="zinc finger region" description="C2H2-type 2" evidence="5">
    <location>
        <begin position="314"/>
        <end position="338"/>
    </location>
</feature>
<feature type="zinc finger region" description="C2H2-type 3" evidence="5">
    <location>
        <begin position="344"/>
        <end position="366"/>
    </location>
</feature>
<feature type="zinc finger region" description="C2H2-type 4" evidence="5">
    <location>
        <begin position="372"/>
        <end position="396"/>
    </location>
</feature>
<feature type="region of interest" description="Important for interaction with target DNA" evidence="2">
    <location>
        <begin position="328"/>
        <end position="342"/>
    </location>
</feature>
<feature type="region of interest" description="Important for interaction with target DNA" evidence="2">
    <location>
        <begin position="354"/>
        <end position="362"/>
    </location>
</feature>
<feature type="short sequence motif" description="9aaTAD" evidence="2">
    <location>
        <begin position="213"/>
        <end position="221"/>
    </location>
</feature>
<feature type="site" description="Important for interaction with target DNA" evidence="2">
    <location>
        <position position="382"/>
    </location>
</feature>
<feature type="site" description="Important for interaction with target DNA" evidence="2">
    <location>
        <position position="388"/>
    </location>
</feature>
<feature type="cross-link" description="Glycyl lysine isopeptide (Lys-Gly) (interchain with G-Cter in SUMO)" evidence="2">
    <location>
        <position position="55"/>
    </location>
</feature>
<feature type="cross-link" description="Glycyl lysine isopeptide (Lys-Gly) (interchain with G-Cter in SUMO)" evidence="2">
    <location>
        <position position="158"/>
    </location>
</feature>
<gene>
    <name type="primary">wt1-b</name>
    <name evidence="11" type="synonym">wt1</name>
</gene>
<accession>P79958</accession>